<proteinExistence type="inferred from homology"/>
<dbReference type="EC" id="1.17.4.1"/>
<dbReference type="EMBL" id="AE001363">
    <property type="protein sequence ID" value="AAD19122.1"/>
    <property type="molecule type" value="Genomic_DNA"/>
</dbReference>
<dbReference type="EMBL" id="AE002161">
    <property type="protein sequence ID" value="AAF38660.1"/>
    <property type="molecule type" value="Genomic_DNA"/>
</dbReference>
<dbReference type="EMBL" id="BA000008">
    <property type="protein sequence ID" value="BAA99192.1"/>
    <property type="molecule type" value="Genomic_DNA"/>
</dbReference>
<dbReference type="EMBL" id="AE009440">
    <property type="protein sequence ID" value="AAP98951.1"/>
    <property type="status" value="ALT_INIT"/>
    <property type="molecule type" value="Genomic_DNA"/>
</dbReference>
<dbReference type="PIR" id="B72010">
    <property type="entry name" value="B72010"/>
</dbReference>
<dbReference type="PIR" id="F86613">
    <property type="entry name" value="F86613"/>
</dbReference>
<dbReference type="RefSeq" id="NP_225179.1">
    <property type="nucleotide sequence ID" value="NC_000922.1"/>
</dbReference>
<dbReference type="SMR" id="Q9Z6S4"/>
<dbReference type="STRING" id="406984.CPK_ORF00410"/>
<dbReference type="KEGG" id="cpa:CP_0871"/>
<dbReference type="KEGG" id="cpj:nrdB"/>
<dbReference type="KEGG" id="cpn:CPn_0985"/>
<dbReference type="KEGG" id="cpt:CpB1022"/>
<dbReference type="PATRIC" id="fig|115713.3.peg.1080"/>
<dbReference type="eggNOG" id="COG0208">
    <property type="taxonomic scope" value="Bacteria"/>
</dbReference>
<dbReference type="HOGENOM" id="CLU_035339_1_1_0"/>
<dbReference type="OMA" id="SNPFPWM"/>
<dbReference type="OrthoDB" id="9766544at2"/>
<dbReference type="Proteomes" id="UP000000583">
    <property type="component" value="Chromosome"/>
</dbReference>
<dbReference type="Proteomes" id="UP000000801">
    <property type="component" value="Chromosome"/>
</dbReference>
<dbReference type="GO" id="GO:0046872">
    <property type="term" value="F:metal ion binding"/>
    <property type="evidence" value="ECO:0007669"/>
    <property type="project" value="UniProtKB-KW"/>
</dbReference>
<dbReference type="GO" id="GO:0004748">
    <property type="term" value="F:ribonucleoside-diphosphate reductase activity, thioredoxin disulfide as acceptor"/>
    <property type="evidence" value="ECO:0007669"/>
    <property type="project" value="UniProtKB-EC"/>
</dbReference>
<dbReference type="GO" id="GO:0009263">
    <property type="term" value="P:deoxyribonucleotide biosynthetic process"/>
    <property type="evidence" value="ECO:0007669"/>
    <property type="project" value="UniProtKB-KW"/>
</dbReference>
<dbReference type="CDD" id="cd01049">
    <property type="entry name" value="RNRR2"/>
    <property type="match status" value="1"/>
</dbReference>
<dbReference type="Gene3D" id="1.10.620.20">
    <property type="entry name" value="Ribonucleotide Reductase, subunit A"/>
    <property type="match status" value="1"/>
</dbReference>
<dbReference type="InterPro" id="IPR009078">
    <property type="entry name" value="Ferritin-like_SF"/>
</dbReference>
<dbReference type="InterPro" id="IPR012348">
    <property type="entry name" value="RNR-like"/>
</dbReference>
<dbReference type="InterPro" id="IPR033909">
    <property type="entry name" value="RNR_small"/>
</dbReference>
<dbReference type="InterPro" id="IPR000358">
    <property type="entry name" value="RNR_small_fam"/>
</dbReference>
<dbReference type="NCBIfam" id="NF005550">
    <property type="entry name" value="PRK07209.1"/>
    <property type="match status" value="1"/>
</dbReference>
<dbReference type="NCBIfam" id="NF007186">
    <property type="entry name" value="PRK09614.1-5"/>
    <property type="match status" value="1"/>
</dbReference>
<dbReference type="PANTHER" id="PTHR23409">
    <property type="entry name" value="RIBONUCLEOSIDE-DIPHOSPHATE REDUCTASE SMALL CHAIN"/>
    <property type="match status" value="1"/>
</dbReference>
<dbReference type="PANTHER" id="PTHR23409:SF18">
    <property type="entry name" value="RIBONUCLEOSIDE-DIPHOSPHATE REDUCTASE SUBUNIT M2"/>
    <property type="match status" value="1"/>
</dbReference>
<dbReference type="Pfam" id="PF00268">
    <property type="entry name" value="Ribonuc_red_sm"/>
    <property type="match status" value="1"/>
</dbReference>
<dbReference type="PIRSF" id="PIRSF000355">
    <property type="entry name" value="NrdB"/>
    <property type="match status" value="1"/>
</dbReference>
<dbReference type="SUPFAM" id="SSF47240">
    <property type="entry name" value="Ferritin-like"/>
    <property type="match status" value="1"/>
</dbReference>
<protein>
    <recommendedName>
        <fullName>Ribonucleoside-diphosphate reductase subunit beta</fullName>
        <ecNumber>1.17.4.1</ecNumber>
    </recommendedName>
    <alternativeName>
        <fullName>Ribonucleotide reductase small subunit</fullName>
    </alternativeName>
</protein>
<reference key="1">
    <citation type="journal article" date="1999" name="Nat. Genet.">
        <title>Comparative genomes of Chlamydia pneumoniae and C. trachomatis.</title>
        <authorList>
            <person name="Kalman S."/>
            <person name="Mitchell W.P."/>
            <person name="Marathe R."/>
            <person name="Lammel C.J."/>
            <person name="Fan J."/>
            <person name="Hyman R.W."/>
            <person name="Olinger L."/>
            <person name="Grimwood J."/>
            <person name="Davis R.W."/>
            <person name="Stephens R.S."/>
        </authorList>
    </citation>
    <scope>NUCLEOTIDE SEQUENCE [LARGE SCALE GENOMIC DNA]</scope>
    <source>
        <strain>CWL029</strain>
    </source>
</reference>
<reference key="2">
    <citation type="journal article" date="2000" name="Nucleic Acids Res.">
        <title>Genome sequences of Chlamydia trachomatis MoPn and Chlamydia pneumoniae AR39.</title>
        <authorList>
            <person name="Read T.D."/>
            <person name="Brunham R.C."/>
            <person name="Shen C."/>
            <person name="Gill S.R."/>
            <person name="Heidelberg J.F."/>
            <person name="White O."/>
            <person name="Hickey E.K."/>
            <person name="Peterson J.D."/>
            <person name="Utterback T.R."/>
            <person name="Berry K.J."/>
            <person name="Bass S."/>
            <person name="Linher K.D."/>
            <person name="Weidman J.F."/>
            <person name="Khouri H.M."/>
            <person name="Craven B."/>
            <person name="Bowman C."/>
            <person name="Dodson R.J."/>
            <person name="Gwinn M.L."/>
            <person name="Nelson W.C."/>
            <person name="DeBoy R.T."/>
            <person name="Kolonay J.F."/>
            <person name="McClarty G."/>
            <person name="Salzberg S.L."/>
            <person name="Eisen J.A."/>
            <person name="Fraser C.M."/>
        </authorList>
    </citation>
    <scope>NUCLEOTIDE SEQUENCE [LARGE SCALE GENOMIC DNA]</scope>
    <source>
        <strain>AR39</strain>
    </source>
</reference>
<reference key="3">
    <citation type="journal article" date="2000" name="Nucleic Acids Res.">
        <title>Comparison of whole genome sequences of Chlamydia pneumoniae J138 from Japan and CWL029 from USA.</title>
        <authorList>
            <person name="Shirai M."/>
            <person name="Hirakawa H."/>
            <person name="Kimoto M."/>
            <person name="Tabuchi M."/>
            <person name="Kishi F."/>
            <person name="Ouchi K."/>
            <person name="Shiba T."/>
            <person name="Ishii K."/>
            <person name="Hattori M."/>
            <person name="Kuhara S."/>
            <person name="Nakazawa T."/>
        </authorList>
    </citation>
    <scope>NUCLEOTIDE SEQUENCE [LARGE SCALE GENOMIC DNA]</scope>
    <source>
        <strain>J138</strain>
    </source>
</reference>
<reference key="4">
    <citation type="submission" date="2002-05" db="EMBL/GenBank/DDBJ databases">
        <title>The genome sequence of Chlamydia pneumoniae TW183 and comparison with other Chlamydia strains based on whole genome sequence analysis.</title>
        <authorList>
            <person name="Geng M.M."/>
            <person name="Schuhmacher A."/>
            <person name="Muehldorfer I."/>
            <person name="Bensch K.W."/>
            <person name="Schaefer K.P."/>
            <person name="Schneider S."/>
            <person name="Pohl T."/>
            <person name="Essig A."/>
            <person name="Marre R."/>
            <person name="Melchers K."/>
        </authorList>
    </citation>
    <scope>NUCLEOTIDE SEQUENCE [LARGE SCALE GENOMIC DNA]</scope>
    <source>
        <strain>TW-183</strain>
    </source>
</reference>
<keyword id="KW-0215">Deoxyribonucleotide synthesis</keyword>
<keyword id="KW-0408">Iron</keyword>
<keyword id="KW-0479">Metal-binding</keyword>
<keyword id="KW-0560">Oxidoreductase</keyword>
<organism>
    <name type="scientific">Chlamydia pneumoniae</name>
    <name type="common">Chlamydophila pneumoniae</name>
    <dbReference type="NCBI Taxonomy" id="83558"/>
    <lineage>
        <taxon>Bacteria</taxon>
        <taxon>Pseudomonadati</taxon>
        <taxon>Chlamydiota</taxon>
        <taxon>Chlamydiia</taxon>
        <taxon>Chlamydiales</taxon>
        <taxon>Chlamydiaceae</taxon>
        <taxon>Chlamydia/Chlamydophila group</taxon>
        <taxon>Chlamydia</taxon>
    </lineage>
</organism>
<gene>
    <name type="primary">nrdB</name>
    <name type="ordered locus">CPn_0985</name>
    <name type="ordered locus">CP_0871</name>
    <name type="ordered locus">CpB1022</name>
</gene>
<feature type="chain" id="PRO_0000190474" description="Ribonucleoside-diphosphate reductase subunit beta">
    <location>
        <begin position="1"/>
        <end position="346"/>
    </location>
</feature>
<feature type="active site" evidence="1">
    <location>
        <position position="129"/>
    </location>
</feature>
<feature type="binding site" evidence="1">
    <location>
        <position position="89"/>
    </location>
    <ligand>
        <name>Fe cation</name>
        <dbReference type="ChEBI" id="CHEBI:24875"/>
        <label>1</label>
    </ligand>
</feature>
<feature type="binding site" evidence="1">
    <location>
        <position position="120"/>
    </location>
    <ligand>
        <name>Fe cation</name>
        <dbReference type="ChEBI" id="CHEBI:24875"/>
        <label>1</label>
    </ligand>
</feature>
<feature type="binding site" evidence="1">
    <location>
        <position position="120"/>
    </location>
    <ligand>
        <name>Fe cation</name>
        <dbReference type="ChEBI" id="CHEBI:24875"/>
        <label>2</label>
    </ligand>
</feature>
<feature type="binding site" evidence="1">
    <location>
        <position position="123"/>
    </location>
    <ligand>
        <name>Fe cation</name>
        <dbReference type="ChEBI" id="CHEBI:24875"/>
        <label>1</label>
    </ligand>
</feature>
<feature type="binding site" evidence="1">
    <location>
        <position position="193"/>
    </location>
    <ligand>
        <name>Fe cation</name>
        <dbReference type="ChEBI" id="CHEBI:24875"/>
        <label>2</label>
    </ligand>
</feature>
<feature type="binding site" evidence="1">
    <location>
        <position position="227"/>
    </location>
    <ligand>
        <name>Fe cation</name>
        <dbReference type="ChEBI" id="CHEBI:24875"/>
        <label>2</label>
    </ligand>
</feature>
<feature type="binding site" evidence="1">
    <location>
        <position position="230"/>
    </location>
    <ligand>
        <name>Fe cation</name>
        <dbReference type="ChEBI" id="CHEBI:24875"/>
        <label>2</label>
    </ligand>
</feature>
<evidence type="ECO:0000250" key="1"/>
<evidence type="ECO:0000305" key="2"/>
<name>RIR2_CHLPN</name>
<accession>Q9Z6S4</accession>
<comment type="function">
    <text evidence="1">Provides the precursors necessary for DNA synthesis. Catalyzes the biosynthesis of deoxyribonucleotides from the corresponding ribonucleotides (By similarity).</text>
</comment>
<comment type="catalytic activity">
    <reaction>
        <text>a 2'-deoxyribonucleoside 5'-diphosphate + [thioredoxin]-disulfide + H2O = a ribonucleoside 5'-diphosphate + [thioredoxin]-dithiol</text>
        <dbReference type="Rhea" id="RHEA:23252"/>
        <dbReference type="Rhea" id="RHEA-COMP:10698"/>
        <dbReference type="Rhea" id="RHEA-COMP:10700"/>
        <dbReference type="ChEBI" id="CHEBI:15377"/>
        <dbReference type="ChEBI" id="CHEBI:29950"/>
        <dbReference type="ChEBI" id="CHEBI:50058"/>
        <dbReference type="ChEBI" id="CHEBI:57930"/>
        <dbReference type="ChEBI" id="CHEBI:73316"/>
        <dbReference type="EC" id="1.17.4.1"/>
    </reaction>
</comment>
<comment type="cofactor">
    <cofactor evidence="1">
        <name>Fe cation</name>
        <dbReference type="ChEBI" id="CHEBI:24875"/>
    </cofactor>
    <text evidence="1">Binds 2 iron ions per subunit.</text>
</comment>
<comment type="subunit">
    <text evidence="1">Tetramer of two alpha and two beta subunits.</text>
</comment>
<comment type="similarity">
    <text evidence="2">Belongs to the ribonucleoside diphosphate reductase small chain family.</text>
</comment>
<comment type="sequence caution" evidence="2">
    <conflict type="erroneous initiation">
        <sequence resource="EMBL-CDS" id="AAP98951"/>
    </conflict>
    <text>Extended N-terminus.</text>
</comment>
<sequence>MEADILDGKLKRVEVSKKGLVNCNQVDVNQLVPIKYKWAWEHYLNGCANNWLPTEVPMARDIELWKSDELSEDERRVILLNLGFFSTAESLVGNNIVLAIFKHITNPEARQYLLRQAFEEAVHTHTFLYICESLGLDEGEVFNAYNERASIRAKDDFQMTLTVDVLDPNFSVQSSEGLGQFIKNLVGYYIIMEGIFFYSGFVMILSFHRQNKMTGIGEQYQYILRDETIHLNFGIDLINGIKEENPEVWTTELQEEIVALIEKAVELEIEYAKDCLPRGILGLRSSMFIDYVRHIADRRLERIGLKPIYHSRNPFPWMSETMDLNKEKNFFETRVTEYQTAGNLSW</sequence>